<comment type="function">
    <text evidence="1">RuBisCO catalyzes two reactions: the carboxylation of D-ribulose 1,5-bisphosphate, the primary event in carbon dioxide fixation, as well as the oxidative fragmentation of the pentose substrate in the photorespiration process. Both reactions occur simultaneously and in competition at the same active site.</text>
</comment>
<comment type="catalytic activity">
    <reaction evidence="1">
        <text>2 (2R)-3-phosphoglycerate + 2 H(+) = D-ribulose 1,5-bisphosphate + CO2 + H2O</text>
        <dbReference type="Rhea" id="RHEA:23124"/>
        <dbReference type="ChEBI" id="CHEBI:15377"/>
        <dbReference type="ChEBI" id="CHEBI:15378"/>
        <dbReference type="ChEBI" id="CHEBI:16526"/>
        <dbReference type="ChEBI" id="CHEBI:57870"/>
        <dbReference type="ChEBI" id="CHEBI:58272"/>
        <dbReference type="EC" id="4.1.1.39"/>
    </reaction>
</comment>
<comment type="catalytic activity">
    <reaction evidence="1">
        <text>D-ribulose 1,5-bisphosphate + O2 = 2-phosphoglycolate + (2R)-3-phosphoglycerate + 2 H(+)</text>
        <dbReference type="Rhea" id="RHEA:36631"/>
        <dbReference type="ChEBI" id="CHEBI:15378"/>
        <dbReference type="ChEBI" id="CHEBI:15379"/>
        <dbReference type="ChEBI" id="CHEBI:57870"/>
        <dbReference type="ChEBI" id="CHEBI:58033"/>
        <dbReference type="ChEBI" id="CHEBI:58272"/>
    </reaction>
</comment>
<comment type="cofactor">
    <cofactor evidence="1">
        <name>Mg(2+)</name>
        <dbReference type="ChEBI" id="CHEBI:18420"/>
    </cofactor>
    <text evidence="1">Binds 1 Mg(2+) ion per subunit.</text>
</comment>
<comment type="subunit">
    <text evidence="1">Heterohexadecamer of 8 large chains and 8 small chains; disulfide-linked. The disulfide link is formed within the large subunit homodimers.</text>
</comment>
<comment type="subcellular location">
    <subcellularLocation>
        <location>Plastid</location>
        <location>Chloroplast</location>
    </subcellularLocation>
</comment>
<comment type="PTM">
    <text evidence="1">The disulfide bond which can form in the large chain dimeric partners within the hexadecamer appears to be associated with oxidative stress and protein turnover.</text>
</comment>
<comment type="miscellaneous">
    <text evidence="1">The basic functional RuBisCO is composed of a large chain homodimer in a 'head-to-tail' conformation. In form I RuBisCO this homodimer is arranged in a barrel-like tetramer with the small subunits forming a tetrameric 'cap' on each end of the 'barrel'.</text>
</comment>
<comment type="similarity">
    <text evidence="1">Belongs to the RuBisCO large chain family. Type I subfamily.</text>
</comment>
<keyword id="KW-0007">Acetylation</keyword>
<keyword id="KW-0113">Calvin cycle</keyword>
<keyword id="KW-0120">Carbon dioxide fixation</keyword>
<keyword id="KW-0150">Chloroplast</keyword>
<keyword id="KW-1015">Disulfide bond</keyword>
<keyword id="KW-0456">Lyase</keyword>
<keyword id="KW-0460">Magnesium</keyword>
<keyword id="KW-0479">Metal-binding</keyword>
<keyword id="KW-0488">Methylation</keyword>
<keyword id="KW-0503">Monooxygenase</keyword>
<keyword id="KW-0560">Oxidoreductase</keyword>
<keyword id="KW-0601">Photorespiration</keyword>
<keyword id="KW-0602">Photosynthesis</keyword>
<keyword id="KW-0934">Plastid</keyword>
<evidence type="ECO:0000255" key="1">
    <source>
        <dbReference type="HAMAP-Rule" id="MF_01338"/>
    </source>
</evidence>
<feature type="propeptide" id="PRO_0000031127" evidence="1">
    <location>
        <begin position="1"/>
        <end position="2"/>
    </location>
</feature>
<feature type="chain" id="PRO_0000031128" description="Ribulose bisphosphate carboxylase large chain">
    <location>
        <begin position="3"/>
        <end position="469" status="greater than"/>
    </location>
</feature>
<feature type="active site" description="Proton acceptor" evidence="1">
    <location>
        <position position="175"/>
    </location>
</feature>
<feature type="active site" description="Proton acceptor" evidence="1">
    <location>
        <position position="294"/>
    </location>
</feature>
<feature type="binding site" description="in homodimeric partner" evidence="1">
    <location>
        <position position="123"/>
    </location>
    <ligand>
        <name>substrate</name>
    </ligand>
</feature>
<feature type="binding site" evidence="1">
    <location>
        <position position="173"/>
    </location>
    <ligand>
        <name>substrate</name>
    </ligand>
</feature>
<feature type="binding site" evidence="1">
    <location>
        <position position="177"/>
    </location>
    <ligand>
        <name>substrate</name>
    </ligand>
</feature>
<feature type="binding site" description="via carbamate group" evidence="1">
    <location>
        <position position="201"/>
    </location>
    <ligand>
        <name>Mg(2+)</name>
        <dbReference type="ChEBI" id="CHEBI:18420"/>
    </ligand>
</feature>
<feature type="binding site" evidence="1">
    <location>
        <position position="203"/>
    </location>
    <ligand>
        <name>Mg(2+)</name>
        <dbReference type="ChEBI" id="CHEBI:18420"/>
    </ligand>
</feature>
<feature type="binding site" evidence="1">
    <location>
        <position position="204"/>
    </location>
    <ligand>
        <name>Mg(2+)</name>
        <dbReference type="ChEBI" id="CHEBI:18420"/>
    </ligand>
</feature>
<feature type="binding site" evidence="1">
    <location>
        <position position="295"/>
    </location>
    <ligand>
        <name>substrate</name>
    </ligand>
</feature>
<feature type="binding site" evidence="1">
    <location>
        <position position="327"/>
    </location>
    <ligand>
        <name>substrate</name>
    </ligand>
</feature>
<feature type="binding site" evidence="1">
    <location>
        <position position="379"/>
    </location>
    <ligand>
        <name>substrate</name>
    </ligand>
</feature>
<feature type="site" description="Transition state stabilizer" evidence="1">
    <location>
        <position position="334"/>
    </location>
</feature>
<feature type="modified residue" description="N-acetylproline" evidence="1">
    <location>
        <position position="3"/>
    </location>
</feature>
<feature type="modified residue" description="N6,N6,N6-trimethyllysine" evidence="1">
    <location>
        <position position="14"/>
    </location>
</feature>
<feature type="modified residue" description="N6-carboxylysine" evidence="1">
    <location>
        <position position="201"/>
    </location>
</feature>
<feature type="disulfide bond" description="Interchain; in linked form" evidence="1">
    <location>
        <position position="247"/>
    </location>
</feature>
<feature type="non-terminal residue">
    <location>
        <position position="469"/>
    </location>
</feature>
<proteinExistence type="inferred from homology"/>
<gene>
    <name evidence="1" type="primary">rbcL</name>
</gene>
<reference key="1">
    <citation type="journal article" date="1990" name="J. Biol. Chem.">
        <title>Comparisons of rbcL genes for the large subunit of ribulose-bisphosphate carboxylase from closely related C3 and C4 plant species.</title>
        <authorList>
            <person name="Hudson G.S."/>
            <person name="Mahon J.D."/>
            <person name="Anderson P.A."/>
            <person name="Gibbs M.J."/>
            <person name="Badger M.R."/>
            <person name="Andrews T.J."/>
            <person name="Whitfeld P.R."/>
        </authorList>
    </citation>
    <scope>NUCLEOTIDE SEQUENCE [GENOMIC DNA]</scope>
</reference>
<name>RBL_ATRPA</name>
<dbReference type="EC" id="4.1.1.39" evidence="1"/>
<dbReference type="EMBL" id="X15925">
    <property type="protein sequence ID" value="CAA34062.1"/>
    <property type="molecule type" value="Genomic_DNA"/>
</dbReference>
<dbReference type="PIR" id="E34921">
    <property type="entry name" value="RKUBL"/>
</dbReference>
<dbReference type="SMR" id="P19160"/>
<dbReference type="GO" id="GO:0009507">
    <property type="term" value="C:chloroplast"/>
    <property type="evidence" value="ECO:0007669"/>
    <property type="project" value="UniProtKB-SubCell"/>
</dbReference>
<dbReference type="GO" id="GO:0000287">
    <property type="term" value="F:magnesium ion binding"/>
    <property type="evidence" value="ECO:0007669"/>
    <property type="project" value="InterPro"/>
</dbReference>
<dbReference type="GO" id="GO:0004497">
    <property type="term" value="F:monooxygenase activity"/>
    <property type="evidence" value="ECO:0007669"/>
    <property type="project" value="UniProtKB-KW"/>
</dbReference>
<dbReference type="GO" id="GO:0016984">
    <property type="term" value="F:ribulose-bisphosphate carboxylase activity"/>
    <property type="evidence" value="ECO:0007669"/>
    <property type="project" value="UniProtKB-EC"/>
</dbReference>
<dbReference type="GO" id="GO:0009853">
    <property type="term" value="P:photorespiration"/>
    <property type="evidence" value="ECO:0007669"/>
    <property type="project" value="UniProtKB-KW"/>
</dbReference>
<dbReference type="GO" id="GO:0019253">
    <property type="term" value="P:reductive pentose-phosphate cycle"/>
    <property type="evidence" value="ECO:0007669"/>
    <property type="project" value="UniProtKB-KW"/>
</dbReference>
<dbReference type="CDD" id="cd08212">
    <property type="entry name" value="RuBisCO_large_I"/>
    <property type="match status" value="1"/>
</dbReference>
<dbReference type="FunFam" id="3.20.20.110:FF:000001">
    <property type="entry name" value="Ribulose bisphosphate carboxylase large chain"/>
    <property type="match status" value="1"/>
</dbReference>
<dbReference type="FunFam" id="3.30.70.150:FF:000001">
    <property type="entry name" value="Ribulose bisphosphate carboxylase large chain"/>
    <property type="match status" value="1"/>
</dbReference>
<dbReference type="Gene3D" id="3.20.20.110">
    <property type="entry name" value="Ribulose bisphosphate carboxylase, large subunit, C-terminal domain"/>
    <property type="match status" value="1"/>
</dbReference>
<dbReference type="Gene3D" id="3.30.70.150">
    <property type="entry name" value="RuBisCO large subunit, N-terminal domain"/>
    <property type="match status" value="1"/>
</dbReference>
<dbReference type="HAMAP" id="MF_01338">
    <property type="entry name" value="RuBisCO_L_type1"/>
    <property type="match status" value="1"/>
</dbReference>
<dbReference type="InterPro" id="IPR033966">
    <property type="entry name" value="RuBisCO"/>
</dbReference>
<dbReference type="InterPro" id="IPR020878">
    <property type="entry name" value="RuBisCo_large_chain_AS"/>
</dbReference>
<dbReference type="InterPro" id="IPR000685">
    <property type="entry name" value="RuBisCO_lsu_C"/>
</dbReference>
<dbReference type="InterPro" id="IPR036376">
    <property type="entry name" value="RuBisCO_lsu_C_sf"/>
</dbReference>
<dbReference type="InterPro" id="IPR017443">
    <property type="entry name" value="RuBisCO_lsu_fd_N"/>
</dbReference>
<dbReference type="InterPro" id="IPR036422">
    <property type="entry name" value="RuBisCO_lsu_N_sf"/>
</dbReference>
<dbReference type="InterPro" id="IPR020888">
    <property type="entry name" value="RuBisCO_lsuI"/>
</dbReference>
<dbReference type="NCBIfam" id="NF003252">
    <property type="entry name" value="PRK04208.1"/>
    <property type="match status" value="1"/>
</dbReference>
<dbReference type="PANTHER" id="PTHR42704">
    <property type="entry name" value="RIBULOSE BISPHOSPHATE CARBOXYLASE"/>
    <property type="match status" value="1"/>
</dbReference>
<dbReference type="PANTHER" id="PTHR42704:SF15">
    <property type="entry name" value="RIBULOSE BISPHOSPHATE CARBOXYLASE LARGE CHAIN"/>
    <property type="match status" value="1"/>
</dbReference>
<dbReference type="Pfam" id="PF00016">
    <property type="entry name" value="RuBisCO_large"/>
    <property type="match status" value="1"/>
</dbReference>
<dbReference type="Pfam" id="PF02788">
    <property type="entry name" value="RuBisCO_large_N"/>
    <property type="match status" value="1"/>
</dbReference>
<dbReference type="SFLD" id="SFLDG01052">
    <property type="entry name" value="RuBisCO"/>
    <property type="match status" value="1"/>
</dbReference>
<dbReference type="SFLD" id="SFLDS00014">
    <property type="entry name" value="RuBisCO"/>
    <property type="match status" value="1"/>
</dbReference>
<dbReference type="SFLD" id="SFLDG00301">
    <property type="entry name" value="RuBisCO-like_proteins"/>
    <property type="match status" value="1"/>
</dbReference>
<dbReference type="SUPFAM" id="SSF51649">
    <property type="entry name" value="RuBisCo, C-terminal domain"/>
    <property type="match status" value="1"/>
</dbReference>
<dbReference type="SUPFAM" id="SSF54966">
    <property type="entry name" value="RuBisCO, large subunit, small (N-terminal) domain"/>
    <property type="match status" value="1"/>
</dbReference>
<dbReference type="PROSITE" id="PS00157">
    <property type="entry name" value="RUBISCO_LARGE"/>
    <property type="match status" value="1"/>
</dbReference>
<protein>
    <recommendedName>
        <fullName evidence="1">Ribulose bisphosphate carboxylase large chain</fullName>
        <shortName evidence="1">RuBisCO large subunit</shortName>
        <ecNumber evidence="1">4.1.1.39</ecNumber>
    </recommendedName>
</protein>
<sequence>MSPQTETKASVGFKAGVKDYKLTYYTPEYETLDTDILAAFRVSPQPGVPPEEAGAAVAAESSTGTWTTVWTDGLTSLDRYKGRCYHIEPVAGEENQYICYVAYPLDLFEEGSVTNMFTSIVGNVFGFKALRALRLEDLRIPVAYIKTFQGPPHGIQVERDKLNKYGRPLLGCTIKPKLGLSAKNYGRAVYEVLRGGLDFTKDDENVNSQPFMRWRDRFLFCAEALYKAQAETGEIKGHYLNATAGTCEDMMKRAVFARELGVPIVMHDYLTGGFTANTTLAHYCRDNGLLLHIHRAMHAVIDRQKNHGMHFRVLAKALRLSGGDHIHSGTVVGKLEGERDITLGFVDLLRDDYTEKDRSRGIYFTQSWVSTPGVLPVASGGIHVWHMPALTEIFGDDSVLQFGGGTLGHPWGNAPGAVANRVALEACVQARNEGRDLAREGNTIIREASKWSPELAAACEIWKEIKFEF</sequence>
<organism>
    <name type="scientific">Atriplex patula</name>
    <name type="common">Common orache</name>
    <dbReference type="NCBI Taxonomy" id="3551"/>
    <lineage>
        <taxon>Eukaryota</taxon>
        <taxon>Viridiplantae</taxon>
        <taxon>Streptophyta</taxon>
        <taxon>Embryophyta</taxon>
        <taxon>Tracheophyta</taxon>
        <taxon>Spermatophyta</taxon>
        <taxon>Magnoliopsida</taxon>
        <taxon>eudicotyledons</taxon>
        <taxon>Gunneridae</taxon>
        <taxon>Pentapetalae</taxon>
        <taxon>Caryophyllales</taxon>
        <taxon>Chenopodiaceae</taxon>
        <taxon>Chenopodioideae</taxon>
        <taxon>Atripliceae</taxon>
        <taxon>Atriplex</taxon>
    </lineage>
</organism>
<accession>P19160</accession>
<geneLocation type="chloroplast"/>